<dbReference type="EMBL" id="CP001096">
    <property type="protein sequence ID" value="ACF03329.1"/>
    <property type="molecule type" value="Genomic_DNA"/>
</dbReference>
<dbReference type="RefSeq" id="WP_011159890.1">
    <property type="nucleotide sequence ID" value="NC_011004.1"/>
</dbReference>
<dbReference type="SMR" id="B3Q7X4"/>
<dbReference type="KEGG" id="rpt:Rpal_4840"/>
<dbReference type="HOGENOM" id="CLU_075939_0_0_5"/>
<dbReference type="OrthoDB" id="9806411at2"/>
<dbReference type="Proteomes" id="UP000001725">
    <property type="component" value="Chromosome"/>
</dbReference>
<dbReference type="GO" id="GO:0022625">
    <property type="term" value="C:cytosolic large ribosomal subunit"/>
    <property type="evidence" value="ECO:0007669"/>
    <property type="project" value="TreeGrafter"/>
</dbReference>
<dbReference type="GO" id="GO:0008097">
    <property type="term" value="F:5S rRNA binding"/>
    <property type="evidence" value="ECO:0007669"/>
    <property type="project" value="InterPro"/>
</dbReference>
<dbReference type="GO" id="GO:0003735">
    <property type="term" value="F:structural constituent of ribosome"/>
    <property type="evidence" value="ECO:0007669"/>
    <property type="project" value="InterPro"/>
</dbReference>
<dbReference type="GO" id="GO:0006412">
    <property type="term" value="P:translation"/>
    <property type="evidence" value="ECO:0007669"/>
    <property type="project" value="UniProtKB-UniRule"/>
</dbReference>
<dbReference type="CDD" id="cd00495">
    <property type="entry name" value="Ribosomal_L25_TL5_CTC"/>
    <property type="match status" value="1"/>
</dbReference>
<dbReference type="Gene3D" id="2.170.120.20">
    <property type="entry name" value="Ribosomal protein L25, beta domain"/>
    <property type="match status" value="1"/>
</dbReference>
<dbReference type="Gene3D" id="2.40.240.10">
    <property type="entry name" value="Ribosomal Protein L25, Chain P"/>
    <property type="match status" value="1"/>
</dbReference>
<dbReference type="HAMAP" id="MF_01334">
    <property type="entry name" value="Ribosomal_bL25_CTC"/>
    <property type="match status" value="1"/>
</dbReference>
<dbReference type="InterPro" id="IPR020056">
    <property type="entry name" value="Rbsml_bL25/Gln-tRNA_synth_N"/>
</dbReference>
<dbReference type="InterPro" id="IPR011035">
    <property type="entry name" value="Ribosomal_bL25/Gln-tRNA_synth"/>
</dbReference>
<dbReference type="InterPro" id="IPR020057">
    <property type="entry name" value="Ribosomal_bL25_b-dom"/>
</dbReference>
<dbReference type="InterPro" id="IPR037121">
    <property type="entry name" value="Ribosomal_bL25_C"/>
</dbReference>
<dbReference type="InterPro" id="IPR001021">
    <property type="entry name" value="Ribosomal_bL25_long"/>
</dbReference>
<dbReference type="InterPro" id="IPR029751">
    <property type="entry name" value="Ribosomal_L25_dom"/>
</dbReference>
<dbReference type="InterPro" id="IPR020930">
    <property type="entry name" value="Ribosomal_uL5_bac-type"/>
</dbReference>
<dbReference type="NCBIfam" id="TIGR00731">
    <property type="entry name" value="bL25_bact_ctc"/>
    <property type="match status" value="1"/>
</dbReference>
<dbReference type="NCBIfam" id="NF004128">
    <property type="entry name" value="PRK05618.1-2"/>
    <property type="match status" value="1"/>
</dbReference>
<dbReference type="PANTHER" id="PTHR33284">
    <property type="entry name" value="RIBOSOMAL PROTEIN L25/GLN-TRNA SYNTHETASE, ANTI-CODON-BINDING DOMAIN-CONTAINING PROTEIN"/>
    <property type="match status" value="1"/>
</dbReference>
<dbReference type="PANTHER" id="PTHR33284:SF1">
    <property type="entry name" value="RIBOSOMAL PROTEIN L25_GLN-TRNA SYNTHETASE, ANTI-CODON-BINDING DOMAIN-CONTAINING PROTEIN"/>
    <property type="match status" value="1"/>
</dbReference>
<dbReference type="Pfam" id="PF01386">
    <property type="entry name" value="Ribosomal_L25p"/>
    <property type="match status" value="1"/>
</dbReference>
<dbReference type="Pfam" id="PF14693">
    <property type="entry name" value="Ribosomal_TL5_C"/>
    <property type="match status" value="1"/>
</dbReference>
<dbReference type="SUPFAM" id="SSF50715">
    <property type="entry name" value="Ribosomal protein L25-like"/>
    <property type="match status" value="1"/>
</dbReference>
<organism>
    <name type="scientific">Rhodopseudomonas palustris (strain TIE-1)</name>
    <dbReference type="NCBI Taxonomy" id="395960"/>
    <lineage>
        <taxon>Bacteria</taxon>
        <taxon>Pseudomonadati</taxon>
        <taxon>Pseudomonadota</taxon>
        <taxon>Alphaproteobacteria</taxon>
        <taxon>Hyphomicrobiales</taxon>
        <taxon>Nitrobacteraceae</taxon>
        <taxon>Rhodopseudomonas</taxon>
    </lineage>
</organism>
<protein>
    <recommendedName>
        <fullName evidence="1">Large ribosomal subunit protein bL25</fullName>
    </recommendedName>
    <alternativeName>
        <fullName evidence="2">50S ribosomal protein L25</fullName>
    </alternativeName>
    <alternativeName>
        <fullName evidence="1">General stress protein CTC</fullName>
    </alternativeName>
</protein>
<name>RL25_RHOPT</name>
<evidence type="ECO:0000255" key="1">
    <source>
        <dbReference type="HAMAP-Rule" id="MF_01334"/>
    </source>
</evidence>
<evidence type="ECO:0000305" key="2"/>
<proteinExistence type="inferred from homology"/>
<comment type="function">
    <text evidence="1">This is one of the proteins that binds to the 5S RNA in the ribosome where it forms part of the central protuberance.</text>
</comment>
<comment type="subunit">
    <text evidence="1">Part of the 50S ribosomal subunit; part of the 5S rRNA/L5/L18/L25 subcomplex. Contacts the 5S rRNA. Binds to the 5S rRNA independently of L5 and L18.</text>
</comment>
<comment type="similarity">
    <text evidence="1">Belongs to the bacterial ribosomal protein bL25 family. CTC subfamily.</text>
</comment>
<feature type="chain" id="PRO_1000142552" description="Large ribosomal subunit protein bL25">
    <location>
        <begin position="1"/>
        <end position="230"/>
    </location>
</feature>
<accession>B3Q7X4</accession>
<sequence length="230" mass="23970">MTSVLELKATARPKSGKGAARAERRAGRVPGVIYGDNQSPLPISVEEKELRLRILAGRFLTTVFDVVLDGKKHRVIPRDYHLDPVRDFPIHVDFLRLGAGATIRVSVPLHLKGLEVAPGVKRGGTFNIVTHTVELEAPAENIPQFIEADVSTLDIGVSLHLSDIALPTGVKSVSRDDVTLVTIVPPSGYNEDKAAAGAAPAAAAAPAAAAKAPAAAAKAPAAAAPAAKKK</sequence>
<keyword id="KW-0687">Ribonucleoprotein</keyword>
<keyword id="KW-0689">Ribosomal protein</keyword>
<keyword id="KW-0694">RNA-binding</keyword>
<keyword id="KW-0699">rRNA-binding</keyword>
<reference key="1">
    <citation type="submission" date="2008-05" db="EMBL/GenBank/DDBJ databases">
        <title>Complete sequence of Rhodopseudomonas palustris TIE-1.</title>
        <authorList>
            <consortium name="US DOE Joint Genome Institute"/>
            <person name="Lucas S."/>
            <person name="Copeland A."/>
            <person name="Lapidus A."/>
            <person name="Glavina del Rio T."/>
            <person name="Dalin E."/>
            <person name="Tice H."/>
            <person name="Pitluck S."/>
            <person name="Chain P."/>
            <person name="Malfatti S."/>
            <person name="Shin M."/>
            <person name="Vergez L."/>
            <person name="Lang D."/>
            <person name="Schmutz J."/>
            <person name="Larimer F."/>
            <person name="Land M."/>
            <person name="Hauser L."/>
            <person name="Kyrpides N."/>
            <person name="Mikhailova N."/>
            <person name="Emerson D."/>
            <person name="Newman D.K."/>
            <person name="Roden E."/>
            <person name="Richardson P."/>
        </authorList>
    </citation>
    <scope>NUCLEOTIDE SEQUENCE [LARGE SCALE GENOMIC DNA]</scope>
    <source>
        <strain>TIE-1</strain>
    </source>
</reference>
<gene>
    <name evidence="1" type="primary">rplY</name>
    <name evidence="1" type="synonym">ctc</name>
    <name type="ordered locus">Rpal_4840</name>
</gene>